<name>CXCL3_RAT</name>
<dbReference type="EMBL" id="D21095">
    <property type="protein sequence ID" value="BAA04657.1"/>
    <property type="molecule type" value="mRNA"/>
</dbReference>
<dbReference type="EMBL" id="D87926">
    <property type="protein sequence ID" value="BAB12336.1"/>
    <property type="molecule type" value="Genomic_DNA"/>
</dbReference>
<dbReference type="EMBL" id="D87926">
    <property type="protein sequence ID" value="BAB12279.1"/>
    <property type="molecule type" value="Genomic_DNA"/>
</dbReference>
<dbReference type="EMBL" id="D87927">
    <property type="protein sequence ID" value="BAB12280.1"/>
    <property type="molecule type" value="mRNA"/>
</dbReference>
<dbReference type="PIR" id="S46198">
    <property type="entry name" value="S46198"/>
</dbReference>
<dbReference type="RefSeq" id="NP_001381519.1">
    <molecule id="Q10746-1"/>
    <property type="nucleotide sequence ID" value="NM_001394590.1"/>
</dbReference>
<dbReference type="RefSeq" id="NP_612531.1">
    <property type="nucleotide sequence ID" value="NM_138522.1"/>
</dbReference>
<dbReference type="RefSeq" id="XP_006250783.1">
    <property type="nucleotide sequence ID" value="XM_006250721.3"/>
</dbReference>
<dbReference type="SMR" id="Q10746"/>
<dbReference type="FunCoup" id="Q10746">
    <property type="interactions" value="430"/>
</dbReference>
<dbReference type="STRING" id="10116.ENSRNOP00000070985"/>
<dbReference type="PhosphoSitePlus" id="Q10746"/>
<dbReference type="PaxDb" id="10116-ENSRNOP00000038520"/>
<dbReference type="Ensembl" id="ENSRNOT00000034090.4">
    <molecule id="Q10746-2"/>
    <property type="protein sequence ID" value="ENSRNOP00000038520.2"/>
    <property type="gene ID" value="ENSRNOG00000028043.5"/>
</dbReference>
<dbReference type="Ensembl" id="ENSRNOT00000098120.1">
    <molecule id="Q10746-1"/>
    <property type="protein sequence ID" value="ENSRNOP00000077076.1"/>
    <property type="gene ID" value="ENSRNOG00000028043.5"/>
</dbReference>
<dbReference type="GeneID" id="171551"/>
<dbReference type="UCSC" id="RGD:621812">
    <molecule id="Q10746-1"/>
    <property type="organism name" value="rat"/>
</dbReference>
<dbReference type="AGR" id="RGD:621812"/>
<dbReference type="RGD" id="621812">
    <property type="gene designation" value="Cxcl3"/>
</dbReference>
<dbReference type="eggNOG" id="ENOG502S7MM">
    <property type="taxonomic scope" value="Eukaryota"/>
</dbReference>
<dbReference type="GeneTree" id="ENSGT00940000155233"/>
<dbReference type="HOGENOM" id="CLU_143902_3_0_1"/>
<dbReference type="InParanoid" id="Q10746"/>
<dbReference type="OrthoDB" id="8872899at2759"/>
<dbReference type="PhylomeDB" id="Q10746"/>
<dbReference type="TreeFam" id="TF333433"/>
<dbReference type="Reactome" id="R-RNO-380108">
    <property type="pathway name" value="Chemokine receptors bind chemokines"/>
</dbReference>
<dbReference type="Reactome" id="R-RNO-418594">
    <property type="pathway name" value="G alpha (i) signalling events"/>
</dbReference>
<dbReference type="PRO" id="PR:Q10746"/>
<dbReference type="Proteomes" id="UP000002494">
    <property type="component" value="Chromosome 14"/>
</dbReference>
<dbReference type="Bgee" id="ENSRNOG00000028043">
    <property type="expression patterns" value="Expressed in lung and 6 other cell types or tissues"/>
</dbReference>
<dbReference type="GO" id="GO:0005615">
    <property type="term" value="C:extracellular space"/>
    <property type="evidence" value="ECO:0000314"/>
    <property type="project" value="RGD"/>
</dbReference>
<dbReference type="GO" id="GO:0008009">
    <property type="term" value="F:chemokine activity"/>
    <property type="evidence" value="ECO:0000314"/>
    <property type="project" value="UniProtKB"/>
</dbReference>
<dbReference type="GO" id="GO:0071222">
    <property type="term" value="P:cellular response to lipopolysaccharide"/>
    <property type="evidence" value="ECO:0000270"/>
    <property type="project" value="RGD"/>
</dbReference>
<dbReference type="GO" id="GO:0006955">
    <property type="term" value="P:immune response"/>
    <property type="evidence" value="ECO:0007669"/>
    <property type="project" value="InterPro"/>
</dbReference>
<dbReference type="GO" id="GO:0006954">
    <property type="term" value="P:inflammatory response"/>
    <property type="evidence" value="ECO:0007669"/>
    <property type="project" value="UniProtKB-KW"/>
</dbReference>
<dbReference type="GO" id="GO:0030593">
    <property type="term" value="P:neutrophil chemotaxis"/>
    <property type="evidence" value="ECO:0000314"/>
    <property type="project" value="UniProtKB"/>
</dbReference>
<dbReference type="GO" id="GO:0007204">
    <property type="term" value="P:positive regulation of cytosolic calcium ion concentration"/>
    <property type="evidence" value="ECO:0000314"/>
    <property type="project" value="RGD"/>
</dbReference>
<dbReference type="GO" id="GO:0032496">
    <property type="term" value="P:response to lipopolysaccharide"/>
    <property type="evidence" value="ECO:0000270"/>
    <property type="project" value="RGD"/>
</dbReference>
<dbReference type="CDD" id="cd00273">
    <property type="entry name" value="Chemokine_CXC"/>
    <property type="match status" value="1"/>
</dbReference>
<dbReference type="FunFam" id="2.40.50.40:FF:000004">
    <property type="entry name" value="C-X-C motif chemokine"/>
    <property type="match status" value="1"/>
</dbReference>
<dbReference type="Gene3D" id="2.40.50.40">
    <property type="match status" value="1"/>
</dbReference>
<dbReference type="InterPro" id="IPR039809">
    <property type="entry name" value="Chemokine_b/g/d"/>
</dbReference>
<dbReference type="InterPro" id="IPR001089">
    <property type="entry name" value="Chemokine_CXC"/>
</dbReference>
<dbReference type="InterPro" id="IPR018048">
    <property type="entry name" value="Chemokine_CXC_CS"/>
</dbReference>
<dbReference type="InterPro" id="IPR001811">
    <property type="entry name" value="Chemokine_IL8-like_dom"/>
</dbReference>
<dbReference type="InterPro" id="IPR033899">
    <property type="entry name" value="CXC_Chemokine_domain"/>
</dbReference>
<dbReference type="InterPro" id="IPR036048">
    <property type="entry name" value="Interleukin_8-like_sf"/>
</dbReference>
<dbReference type="PANTHER" id="PTHR12015:SF207">
    <property type="entry name" value="C-X-C MOTIF CHEMOKINE 3"/>
    <property type="match status" value="1"/>
</dbReference>
<dbReference type="PANTHER" id="PTHR12015">
    <property type="entry name" value="SMALL INDUCIBLE CYTOKINE A"/>
    <property type="match status" value="1"/>
</dbReference>
<dbReference type="Pfam" id="PF00048">
    <property type="entry name" value="IL8"/>
    <property type="match status" value="1"/>
</dbReference>
<dbReference type="PRINTS" id="PR00436">
    <property type="entry name" value="INTERLEUKIN8"/>
</dbReference>
<dbReference type="PRINTS" id="PR00437">
    <property type="entry name" value="SMALLCYTKCXC"/>
</dbReference>
<dbReference type="SMART" id="SM00199">
    <property type="entry name" value="SCY"/>
    <property type="match status" value="1"/>
</dbReference>
<dbReference type="SUPFAM" id="SSF54117">
    <property type="entry name" value="Interleukin 8-like chemokines"/>
    <property type="match status" value="1"/>
</dbReference>
<dbReference type="PROSITE" id="PS00471">
    <property type="entry name" value="SMALL_CYTOKINES_CXC"/>
    <property type="match status" value="1"/>
</dbReference>
<keyword id="KW-0025">Alternative splicing</keyword>
<keyword id="KW-0145">Chemotaxis</keyword>
<keyword id="KW-0202">Cytokine</keyword>
<keyword id="KW-0903">Direct protein sequencing</keyword>
<keyword id="KW-1015">Disulfide bond</keyword>
<keyword id="KW-0395">Inflammatory response</keyword>
<keyword id="KW-1185">Reference proteome</keyword>
<keyword id="KW-0964">Secreted</keyword>
<keyword id="KW-0732">Signal</keyword>
<evidence type="ECO:0000250" key="1"/>
<evidence type="ECO:0000269" key="2">
    <source>
    </source>
</evidence>
<evidence type="ECO:0000269" key="3">
    <source>
    </source>
</evidence>
<evidence type="ECO:0000269" key="4">
    <source>
    </source>
</evidence>
<evidence type="ECO:0000269" key="5">
    <source>
    </source>
</evidence>
<evidence type="ECO:0000303" key="6">
    <source>
    </source>
</evidence>
<evidence type="ECO:0000305" key="7"/>
<comment type="function">
    <text evidence="1 2 4">Ligand for CXCR2 (By similarity). Has chemotactic activity for neutrophils. May play a role in inflammation and exert its effects on endothelial cells in an autocrine fashion.</text>
</comment>
<comment type="subcellular location">
    <subcellularLocation>
        <location>Secreted</location>
    </subcellularLocation>
</comment>
<comment type="alternative products">
    <event type="alternative splicing"/>
    <isoform>
        <id>Q10746-1</id>
        <name>1</name>
        <name>CINC-2A</name>
        <sequence type="displayed"/>
    </isoform>
    <isoform>
        <id>Q10746-2</id>
        <name>2</name>
        <name>CINC-2B</name>
        <sequence type="described" ref="VSP_035735"/>
    </isoform>
</comment>
<comment type="induction">
    <text evidence="5">By lipopolysaccharide. Expression increases until 4 hours after treatment and then gradually decreases, remaining high 24 hours after stimulation.</text>
</comment>
<comment type="similarity">
    <text evidence="7">Belongs to the intercrine alpha (chemokine CxC) family.</text>
</comment>
<proteinExistence type="evidence at protein level"/>
<feature type="signal peptide" evidence="3 4">
    <location>
        <begin position="1"/>
        <end position="32"/>
    </location>
</feature>
<feature type="chain" id="PRO_0000144297" description="C-X-C motif chemokine 3">
    <location>
        <begin position="33"/>
        <end position="101"/>
    </location>
</feature>
<feature type="disulfide bond" evidence="1">
    <location>
        <begin position="37"/>
        <end position="63"/>
    </location>
</feature>
<feature type="disulfide bond" evidence="1">
    <location>
        <begin position="39"/>
        <end position="79"/>
    </location>
</feature>
<feature type="splice variant" id="VSP_035735" description="In isoform 2." evidence="6">
    <original>DKSS</original>
    <variation>PSL</variation>
    <location>
        <begin position="98"/>
        <end position="101"/>
    </location>
</feature>
<sequence length="101" mass="11109">MAPPTRRLLNAALLLLLLLMATSHQPSGTVVARELRCQCLKTLPRVDFENIQSLTVTPPGPHCTQTEVIATLKDGQEVCLNPQAPRLQKIIQKLLKSDKSS</sequence>
<gene>
    <name type="primary">Cxcl3</name>
    <name type="synonym">Cinc2</name>
</gene>
<organism>
    <name type="scientific">Rattus norvegicus</name>
    <name type="common">Rat</name>
    <dbReference type="NCBI Taxonomy" id="10116"/>
    <lineage>
        <taxon>Eukaryota</taxon>
        <taxon>Metazoa</taxon>
        <taxon>Chordata</taxon>
        <taxon>Craniata</taxon>
        <taxon>Vertebrata</taxon>
        <taxon>Euteleostomi</taxon>
        <taxon>Mammalia</taxon>
        <taxon>Eutheria</taxon>
        <taxon>Euarchontoglires</taxon>
        <taxon>Glires</taxon>
        <taxon>Rodentia</taxon>
        <taxon>Myomorpha</taxon>
        <taxon>Muroidea</taxon>
        <taxon>Muridae</taxon>
        <taxon>Murinae</taxon>
        <taxon>Rattus</taxon>
    </lineage>
</organism>
<protein>
    <recommendedName>
        <fullName>C-X-C motif chemokine 3</fullName>
    </recommendedName>
    <alternativeName>
        <fullName>Cytokine-induced neutrophil chemoattractant 2</fullName>
        <shortName>CINC-2</shortName>
    </alternativeName>
    <alternativeName>
        <fullName>Macrophage inflammatory protein 2-alpha/beta</fullName>
        <shortName>MIP2-alpha/beta</shortName>
    </alternativeName>
</protein>
<accession>Q10746</accession>
<accession>Q10747</accession>
<accession>Q5CZ55</accession>
<accession>Q9EP62</accession>
<reference key="1">
    <citation type="journal article" date="1994" name="Biochem. J.">
        <title>Identification of cytokine-induced neutrophil chemoattractants (CINC), rat GRO/CINC-2 alpha and CINC-2 beta, produced by granulation tissue in culture: purification, complete amino acid sequences and characterization.</title>
        <authorList>
            <person name="Nakagawa H."/>
            <person name="Komorita N."/>
            <person name="Shibata F."/>
            <person name="Ikesue A."/>
            <person name="Konishi K."/>
            <person name="Fujioka M."/>
            <person name="Kato H."/>
        </authorList>
    </citation>
    <scope>NUCLEOTIDE SEQUENCE [MRNA] (ISOFORM 2)</scope>
    <scope>PROTEIN SEQUENCE OF 33-100 (ISOFORM 1)</scope>
    <scope>PROTEIN SEQUENCE OF 33-67 (ISOFORM 2)</scope>
    <scope>FUNCTION</scope>
    <source>
        <strain>Wistar</strain>
        <tissue>Peritoneal cavity</tissue>
    </source>
</reference>
<reference key="2">
    <citation type="journal article" date="1998" name="Cytokine">
        <title>Gene structure, cDNA cloning, and expression of the rat cytokine-induced neutrophil chemoattractant-2 (CINC-2) gene.</title>
        <authorList>
            <person name="Shibata F."/>
            <person name="Konishi K."/>
            <person name="Nakagawa H."/>
        </authorList>
    </citation>
    <scope>NUCLEOTIDE SEQUENCE [GENOMIC DNA / MRNA] (ISOFORM 1)</scope>
    <scope>NUCLEOTIDE SEQUENCE [GENOMIC DNA] (ISOFORM 2)</scope>
    <scope>INDUCTION</scope>
    <source>
        <strain>Wistar</strain>
        <tissue>Peritoneal cavity</tissue>
    </source>
</reference>
<reference key="3">
    <citation type="journal article" date="1993" name="Biochem. Pharmacol.">
        <title>Production of an interleukin-8-like chemokine by cytokine-stimulated rat NRK-49F fibroblasts and its suppression by anti-inflammatory steroids.</title>
        <authorList>
            <person name="Nakagawa H."/>
            <person name="Ikesue A."/>
            <person name="Hatakeyama S."/>
            <person name="Kato H."/>
            <person name="Gotoda T."/>
            <person name="Komorita N."/>
            <person name="Watanabe K."/>
            <person name="Miyai H."/>
        </authorList>
    </citation>
    <scope>PROTEIN SEQUENCE OF 33-56</scope>
    <source>
        <tissue>Fibroblast</tissue>
    </source>
</reference>
<reference key="4">
    <citation type="journal article" date="1996" name="Biochem. Biophys. Res. Commun.">
        <title>Cytokine-induced neutrophil chemoattractant (CINC)-2 alpha, a novel member of rat GRO/CINCs, is a predominant chemokine produced by lipopolysaccharide-stimulated rat macrophages in culture.</title>
        <authorList>
            <person name="Nakagawa H."/>
            <person name="Shiota S."/>
            <person name="Takano K."/>
            <person name="Shibata F."/>
            <person name="Kato H."/>
        </authorList>
    </citation>
    <scope>PROTEIN SEQUENCE OF 33-61</scope>
    <scope>FUNCTION</scope>
    <source>
        <strain>Wistar</strain>
    </source>
</reference>